<feature type="signal peptide" evidence="1">
    <location>
        <begin position="1"/>
        <end position="19"/>
    </location>
</feature>
<feature type="propeptide" id="PRO_0000020939" evidence="2">
    <location>
        <begin position="20"/>
        <end position="29"/>
    </location>
</feature>
<feature type="peptide" id="PRO_0000020940" description="Clavanin-C">
    <location>
        <begin position="30"/>
        <end position="52"/>
    </location>
</feature>
<feature type="propeptide" id="PRO_0000020941">
    <location>
        <begin position="54"/>
        <end position="80"/>
    </location>
</feature>
<feature type="modified residue" description="Phenylalanine amide" evidence="2">
    <location>
        <position position="52"/>
    </location>
</feature>
<name>CLAVC_STYCL</name>
<protein>
    <recommendedName>
        <fullName>Clavanin-C</fullName>
    </recommendedName>
</protein>
<sequence>MKTTILILLILGLGINAKSLEERKSEEEKVFHLLGKIIHHVGNFVYGFSHVFGDDQQDNGKFYGHYAEDNGKHWYDTGDQ</sequence>
<accession>O18493</accession>
<accession>P80712</accession>
<proteinExistence type="evidence at protein level"/>
<evidence type="ECO:0000255" key="1"/>
<evidence type="ECO:0000269" key="2">
    <source>
    </source>
</evidence>
<reference key="1">
    <citation type="journal article" date="1997" name="FEBS Lett.">
        <title>cDNA cloning of Clavanins: antimicrobial peptides of tunicate hemocytes.</title>
        <authorList>
            <person name="Zhao C."/>
            <person name="Lian H."/>
            <person name="Lee I.H."/>
            <person name="Lehrer R.I."/>
        </authorList>
    </citation>
    <scope>NUCLEOTIDE SEQUENCE [MRNA]</scope>
    <source>
        <tissue>Hemocyte</tissue>
        <tissue>Pharynx</tissue>
    </source>
</reference>
<reference key="2">
    <citation type="journal article" date="1997" name="FEBS Lett.">
        <title>Clavanins, alpha-helical antimicrobial peptides from tunicate hemocytes.</title>
        <authorList>
            <person name="Lee I.H."/>
            <person name="Zhao C."/>
            <person name="Cho Y."/>
            <person name="Harwig S.S.L."/>
            <person name="Cooper E.L."/>
            <person name="Lehrer R.I."/>
        </authorList>
    </citation>
    <scope>PROTEIN SEQUENCE OF 30-52</scope>
    <scope>AMIDATION AT PHE-52</scope>
    <source>
        <tissue>Hemocyte</tissue>
    </source>
</reference>
<dbReference type="EMBL" id="Y11017">
    <property type="protein sequence ID" value="CAA71899.1"/>
    <property type="molecule type" value="mRNA"/>
</dbReference>
<dbReference type="EMBL" id="Y10406">
    <property type="protein sequence ID" value="CAA71425.1"/>
    <property type="molecule type" value="mRNA"/>
</dbReference>
<dbReference type="GO" id="GO:0005576">
    <property type="term" value="C:extracellular region"/>
    <property type="evidence" value="ECO:0007669"/>
    <property type="project" value="UniProtKB-SubCell"/>
</dbReference>
<dbReference type="GO" id="GO:0042742">
    <property type="term" value="P:defense response to bacterium"/>
    <property type="evidence" value="ECO:0007669"/>
    <property type="project" value="UniProtKB-KW"/>
</dbReference>
<dbReference type="InterPro" id="IPR008453">
    <property type="entry name" value="Clavanin"/>
</dbReference>
<dbReference type="Pfam" id="PF05452">
    <property type="entry name" value="Clavanin"/>
    <property type="match status" value="1"/>
</dbReference>
<comment type="function">
    <text>Has antimicrobial activity against E.coli, L.monocytogenes and C.albicans.</text>
</comment>
<comment type="subcellular location">
    <subcellularLocation>
        <location>Secreted</location>
    </subcellularLocation>
</comment>
<comment type="tissue specificity">
    <text>Hemocytes and pharyngeal tissues.</text>
</comment>
<organism>
    <name type="scientific">Styela clava</name>
    <name type="common">Sea squirt</name>
    <dbReference type="NCBI Taxonomy" id="7725"/>
    <lineage>
        <taxon>Eukaryota</taxon>
        <taxon>Metazoa</taxon>
        <taxon>Chordata</taxon>
        <taxon>Tunicata</taxon>
        <taxon>Ascidiacea</taxon>
        <taxon>Stolidobranchia</taxon>
        <taxon>Styelidae</taxon>
        <taxon>Styela</taxon>
    </lineage>
</organism>
<keyword id="KW-0027">Amidation</keyword>
<keyword id="KW-0044">Antibiotic</keyword>
<keyword id="KW-0929">Antimicrobial</keyword>
<keyword id="KW-0903">Direct protein sequencing</keyword>
<keyword id="KW-0964">Secreted</keyword>
<keyword id="KW-0732">Signal</keyword>